<evidence type="ECO:0000255" key="1">
    <source>
        <dbReference type="HAMAP-Rule" id="MF_01201"/>
    </source>
</evidence>
<comment type="function">
    <text evidence="1">Catalyzes the interconversion of L-alanine and D-alanine. May also act on other amino acids.</text>
</comment>
<comment type="catalytic activity">
    <reaction evidence="1">
        <text>L-alanine = D-alanine</text>
        <dbReference type="Rhea" id="RHEA:20249"/>
        <dbReference type="ChEBI" id="CHEBI:57416"/>
        <dbReference type="ChEBI" id="CHEBI:57972"/>
        <dbReference type="EC" id="5.1.1.1"/>
    </reaction>
</comment>
<comment type="cofactor">
    <cofactor evidence="1">
        <name>pyridoxal 5'-phosphate</name>
        <dbReference type="ChEBI" id="CHEBI:597326"/>
    </cofactor>
</comment>
<comment type="pathway">
    <text evidence="1">Amino-acid biosynthesis; D-alanine biosynthesis; D-alanine from L-alanine: step 1/1.</text>
</comment>
<comment type="similarity">
    <text evidence="1">Belongs to the alanine racemase family.</text>
</comment>
<sequence>MSDKYYRSAYMNVDLNAVASNFKVFSTLHPNKTVMAVVKANAYGLGSVKVARHLMENGATFFAVATLDEAIELRMHGITAKILVLGVLPAKDIDKAIQHRVALTVPSKQWLKEAIKNISGEQEKKLWLHIKLDTGMGRLGIKDTKTYQEVIEIIQQYEQLVFEGVFTHFACADEPGDMTTEQYQRFKDMVNEAIKPEYIHCQNSAGSLLMDCQFCNAIRPGISLYGYYPSEYVQQKVKVHLKPSVQLIANVVQTKTLQAGESVSYGATYTATDPTTIALLPIGYADGYLRIMQGSFVNVNGHQCEVIGRVCMDQTIVKVPDQVKAGDSVILIDNHRESPQSVEVVAEKQHTINYEVLCNLSRRLPRIYHDGDQRFVTNELLK</sequence>
<name>ALR_STAAE</name>
<protein>
    <recommendedName>
        <fullName evidence="1">Alanine racemase</fullName>
        <ecNumber evidence="1">5.1.1.1</ecNumber>
    </recommendedName>
</protein>
<dbReference type="EC" id="5.1.1.1" evidence="1"/>
<dbReference type="EMBL" id="AP009351">
    <property type="protein sequence ID" value="BAF68247.1"/>
    <property type="molecule type" value="Genomic_DNA"/>
</dbReference>
<dbReference type="RefSeq" id="WP_001281145.1">
    <property type="nucleotide sequence ID" value="NZ_JBBIAE010000008.1"/>
</dbReference>
<dbReference type="SMR" id="A6QIR5"/>
<dbReference type="KEGG" id="sae:NWMN_1975"/>
<dbReference type="HOGENOM" id="CLU_028393_2_1_9"/>
<dbReference type="UniPathway" id="UPA00042">
    <property type="reaction ID" value="UER00497"/>
</dbReference>
<dbReference type="Proteomes" id="UP000006386">
    <property type="component" value="Chromosome"/>
</dbReference>
<dbReference type="GO" id="GO:0005829">
    <property type="term" value="C:cytosol"/>
    <property type="evidence" value="ECO:0007669"/>
    <property type="project" value="TreeGrafter"/>
</dbReference>
<dbReference type="GO" id="GO:0008784">
    <property type="term" value="F:alanine racemase activity"/>
    <property type="evidence" value="ECO:0007669"/>
    <property type="project" value="UniProtKB-UniRule"/>
</dbReference>
<dbReference type="GO" id="GO:0030170">
    <property type="term" value="F:pyridoxal phosphate binding"/>
    <property type="evidence" value="ECO:0007669"/>
    <property type="project" value="UniProtKB-UniRule"/>
</dbReference>
<dbReference type="GO" id="GO:0030632">
    <property type="term" value="P:D-alanine biosynthetic process"/>
    <property type="evidence" value="ECO:0007669"/>
    <property type="project" value="UniProtKB-UniRule"/>
</dbReference>
<dbReference type="GO" id="GO:0009252">
    <property type="term" value="P:peptidoglycan biosynthetic process"/>
    <property type="evidence" value="ECO:0007669"/>
    <property type="project" value="TreeGrafter"/>
</dbReference>
<dbReference type="CDD" id="cd00430">
    <property type="entry name" value="PLPDE_III_AR"/>
    <property type="match status" value="1"/>
</dbReference>
<dbReference type="FunFam" id="2.40.37.10:FF:000006">
    <property type="entry name" value="Alanine racemase"/>
    <property type="match status" value="1"/>
</dbReference>
<dbReference type="FunFam" id="3.20.20.10:FF:000002">
    <property type="entry name" value="Alanine racemase"/>
    <property type="match status" value="1"/>
</dbReference>
<dbReference type="Gene3D" id="3.20.20.10">
    <property type="entry name" value="Alanine racemase"/>
    <property type="match status" value="1"/>
</dbReference>
<dbReference type="Gene3D" id="2.40.37.10">
    <property type="entry name" value="Lyase, Ornithine Decarboxylase, Chain A, domain 1"/>
    <property type="match status" value="1"/>
</dbReference>
<dbReference type="HAMAP" id="MF_01201">
    <property type="entry name" value="Ala_racemase"/>
    <property type="match status" value="1"/>
</dbReference>
<dbReference type="InterPro" id="IPR000821">
    <property type="entry name" value="Ala_racemase"/>
</dbReference>
<dbReference type="InterPro" id="IPR009006">
    <property type="entry name" value="Ala_racemase/Decarboxylase_C"/>
</dbReference>
<dbReference type="InterPro" id="IPR011079">
    <property type="entry name" value="Ala_racemase_C"/>
</dbReference>
<dbReference type="InterPro" id="IPR001608">
    <property type="entry name" value="Ala_racemase_N"/>
</dbReference>
<dbReference type="InterPro" id="IPR020622">
    <property type="entry name" value="Ala_racemase_pyridoxalP-BS"/>
</dbReference>
<dbReference type="InterPro" id="IPR029066">
    <property type="entry name" value="PLP-binding_barrel"/>
</dbReference>
<dbReference type="NCBIfam" id="TIGR00492">
    <property type="entry name" value="alr"/>
    <property type="match status" value="1"/>
</dbReference>
<dbReference type="PANTHER" id="PTHR30511">
    <property type="entry name" value="ALANINE RACEMASE"/>
    <property type="match status" value="1"/>
</dbReference>
<dbReference type="PANTHER" id="PTHR30511:SF0">
    <property type="entry name" value="ALANINE RACEMASE, CATABOLIC-RELATED"/>
    <property type="match status" value="1"/>
</dbReference>
<dbReference type="Pfam" id="PF00842">
    <property type="entry name" value="Ala_racemase_C"/>
    <property type="match status" value="1"/>
</dbReference>
<dbReference type="Pfam" id="PF01168">
    <property type="entry name" value="Ala_racemase_N"/>
    <property type="match status" value="1"/>
</dbReference>
<dbReference type="PRINTS" id="PR00992">
    <property type="entry name" value="ALARACEMASE"/>
</dbReference>
<dbReference type="SMART" id="SM01005">
    <property type="entry name" value="Ala_racemase_C"/>
    <property type="match status" value="1"/>
</dbReference>
<dbReference type="SUPFAM" id="SSF50621">
    <property type="entry name" value="Alanine racemase C-terminal domain-like"/>
    <property type="match status" value="1"/>
</dbReference>
<dbReference type="SUPFAM" id="SSF51419">
    <property type="entry name" value="PLP-binding barrel"/>
    <property type="match status" value="1"/>
</dbReference>
<dbReference type="PROSITE" id="PS00395">
    <property type="entry name" value="ALANINE_RACEMASE"/>
    <property type="match status" value="1"/>
</dbReference>
<reference key="1">
    <citation type="journal article" date="2008" name="J. Bacteriol.">
        <title>Genome sequence of Staphylococcus aureus strain Newman and comparative analysis of staphylococcal genomes: polymorphism and evolution of two major pathogenicity islands.</title>
        <authorList>
            <person name="Baba T."/>
            <person name="Bae T."/>
            <person name="Schneewind O."/>
            <person name="Takeuchi F."/>
            <person name="Hiramatsu K."/>
        </authorList>
    </citation>
    <scope>NUCLEOTIDE SEQUENCE [LARGE SCALE GENOMIC DNA]</scope>
    <source>
        <strain>Newman</strain>
    </source>
</reference>
<keyword id="KW-0413">Isomerase</keyword>
<keyword id="KW-0663">Pyridoxal phosphate</keyword>
<feature type="chain" id="PRO_1000073100" description="Alanine racemase">
    <location>
        <begin position="1"/>
        <end position="382"/>
    </location>
</feature>
<feature type="active site" description="Proton acceptor; specific for D-alanine" evidence="1">
    <location>
        <position position="39"/>
    </location>
</feature>
<feature type="active site" description="Proton acceptor; specific for L-alanine" evidence="1">
    <location>
        <position position="265"/>
    </location>
</feature>
<feature type="binding site" evidence="1">
    <location>
        <position position="138"/>
    </location>
    <ligand>
        <name>substrate</name>
    </ligand>
</feature>
<feature type="binding site" evidence="1">
    <location>
        <position position="312"/>
    </location>
    <ligand>
        <name>substrate</name>
    </ligand>
</feature>
<feature type="modified residue" description="N6-(pyridoxal phosphate)lysine" evidence="1">
    <location>
        <position position="39"/>
    </location>
</feature>
<organism>
    <name type="scientific">Staphylococcus aureus (strain Newman)</name>
    <dbReference type="NCBI Taxonomy" id="426430"/>
    <lineage>
        <taxon>Bacteria</taxon>
        <taxon>Bacillati</taxon>
        <taxon>Bacillota</taxon>
        <taxon>Bacilli</taxon>
        <taxon>Bacillales</taxon>
        <taxon>Staphylococcaceae</taxon>
        <taxon>Staphylococcus</taxon>
    </lineage>
</organism>
<proteinExistence type="inferred from homology"/>
<gene>
    <name type="primary">alr</name>
    <name type="ordered locus">NWMN_1975</name>
</gene>
<accession>A6QIR5</accession>